<sequence length="64" mass="7506">MSTKNRTRRTTTRNIRFPNQMIEQINIALDQKGSGNFSAWVIEACRRRLTSEKRAYTSIKSDEE</sequence>
<dbReference type="EMBL" id="AE005174">
    <property type="protein sequence ID" value="AAG55978.1"/>
    <property type="molecule type" value="Genomic_DNA"/>
</dbReference>
<dbReference type="EMBL" id="BA000007">
    <property type="protein sequence ID" value="BAB35051.1"/>
    <property type="molecule type" value="Genomic_DNA"/>
</dbReference>
<dbReference type="PIR" id="D90832">
    <property type="entry name" value="D90832"/>
</dbReference>
<dbReference type="PIR" id="F85689">
    <property type="entry name" value="F85689"/>
</dbReference>
<dbReference type="RefSeq" id="NP_309655.1">
    <property type="nucleotide sequence ID" value="NC_002695.1"/>
</dbReference>
<dbReference type="RefSeq" id="WP_001300120.1">
    <property type="nucleotide sequence ID" value="NZ_VOAI01000080.1"/>
</dbReference>
<dbReference type="SMR" id="Q8X702"/>
<dbReference type="KEGG" id="ece:Z1881"/>
<dbReference type="PATRIC" id="fig|386585.9.peg.1726"/>
<dbReference type="eggNOG" id="ENOG5033AKV">
    <property type="taxonomic scope" value="Bacteria"/>
</dbReference>
<dbReference type="HOGENOM" id="CLU_191341_0_0_6"/>
<dbReference type="OMA" id="ACTSIQS"/>
<dbReference type="Proteomes" id="UP000000558">
    <property type="component" value="Chromosome"/>
</dbReference>
<dbReference type="Proteomes" id="UP000002519">
    <property type="component" value="Chromosome"/>
</dbReference>
<dbReference type="InterPro" id="IPR025030">
    <property type="entry name" value="DUF3950"/>
</dbReference>
<dbReference type="NCBIfam" id="NF041551">
    <property type="entry name" value="YlcI_YnfO_N"/>
    <property type="match status" value="1"/>
</dbReference>
<dbReference type="Pfam" id="PF13132">
    <property type="entry name" value="DUF3950"/>
    <property type="match status" value="1"/>
</dbReference>
<accession>Q8X702</accession>
<accession>Q7AF00</accession>
<proteinExistence type="predicted"/>
<protein>
    <recommendedName>
        <fullName>Uncharacterized protein YlcI</fullName>
    </recommendedName>
</protein>
<name>YLCI_ECO57</name>
<gene>
    <name type="primary">ylcI</name>
    <name type="ordered locus">Z1881</name>
    <name type="ordered locus">ECs1628</name>
</gene>
<reference key="1">
    <citation type="journal article" date="2001" name="Nature">
        <title>Genome sequence of enterohaemorrhagic Escherichia coli O157:H7.</title>
        <authorList>
            <person name="Perna N.T."/>
            <person name="Plunkett G. III"/>
            <person name="Burland V."/>
            <person name="Mau B."/>
            <person name="Glasner J.D."/>
            <person name="Rose D.J."/>
            <person name="Mayhew G.F."/>
            <person name="Evans P.S."/>
            <person name="Gregor J."/>
            <person name="Kirkpatrick H.A."/>
            <person name="Posfai G."/>
            <person name="Hackett J."/>
            <person name="Klink S."/>
            <person name="Boutin A."/>
            <person name="Shao Y."/>
            <person name="Miller L."/>
            <person name="Grotbeck E.J."/>
            <person name="Davis N.W."/>
            <person name="Lim A."/>
            <person name="Dimalanta E.T."/>
            <person name="Potamousis K."/>
            <person name="Apodaca J."/>
            <person name="Anantharaman T.S."/>
            <person name="Lin J."/>
            <person name="Yen G."/>
            <person name="Schwartz D.C."/>
            <person name="Welch R.A."/>
            <person name="Blattner F.R."/>
        </authorList>
    </citation>
    <scope>NUCLEOTIDE SEQUENCE [LARGE SCALE GENOMIC DNA]</scope>
    <source>
        <strain>O157:H7 / EDL933 / ATCC 700927 / EHEC</strain>
    </source>
</reference>
<reference key="2">
    <citation type="journal article" date="2001" name="DNA Res.">
        <title>Complete genome sequence of enterohemorrhagic Escherichia coli O157:H7 and genomic comparison with a laboratory strain K-12.</title>
        <authorList>
            <person name="Hayashi T."/>
            <person name="Makino K."/>
            <person name="Ohnishi M."/>
            <person name="Kurokawa K."/>
            <person name="Ishii K."/>
            <person name="Yokoyama K."/>
            <person name="Han C.-G."/>
            <person name="Ohtsubo E."/>
            <person name="Nakayama K."/>
            <person name="Murata T."/>
            <person name="Tanaka M."/>
            <person name="Tobe T."/>
            <person name="Iida T."/>
            <person name="Takami H."/>
            <person name="Honda T."/>
            <person name="Sasakawa C."/>
            <person name="Ogasawara N."/>
            <person name="Yasunaga T."/>
            <person name="Kuhara S."/>
            <person name="Shiba T."/>
            <person name="Hattori M."/>
            <person name="Shinagawa H."/>
        </authorList>
    </citation>
    <scope>NUCLEOTIDE SEQUENCE [LARGE SCALE GENOMIC DNA]</scope>
    <source>
        <strain>O157:H7 / Sakai / RIMD 0509952 / EHEC</strain>
    </source>
</reference>
<organism>
    <name type="scientific">Escherichia coli O157:H7</name>
    <dbReference type="NCBI Taxonomy" id="83334"/>
    <lineage>
        <taxon>Bacteria</taxon>
        <taxon>Pseudomonadati</taxon>
        <taxon>Pseudomonadota</taxon>
        <taxon>Gammaproteobacteria</taxon>
        <taxon>Enterobacterales</taxon>
        <taxon>Enterobacteriaceae</taxon>
        <taxon>Escherichia</taxon>
    </lineage>
</organism>
<feature type="chain" id="PRO_0000311776" description="Uncharacterized protein YlcI">
    <location>
        <begin position="1"/>
        <end position="64"/>
    </location>
</feature>
<keyword id="KW-1185">Reference proteome</keyword>